<evidence type="ECO:0000255" key="1">
    <source>
        <dbReference type="HAMAP-Rule" id="MF_00368"/>
    </source>
</evidence>
<evidence type="ECO:0000305" key="2"/>
<organism>
    <name type="scientific">Corynebacterium efficiens (strain DSM 44549 / YS-314 / AJ 12310 / JCM 11189 / NBRC 100395)</name>
    <dbReference type="NCBI Taxonomy" id="196164"/>
    <lineage>
        <taxon>Bacteria</taxon>
        <taxon>Bacillati</taxon>
        <taxon>Actinomycetota</taxon>
        <taxon>Actinomycetes</taxon>
        <taxon>Mycobacteriales</taxon>
        <taxon>Corynebacteriaceae</taxon>
        <taxon>Corynebacterium</taxon>
    </lineage>
</organism>
<name>RL7_COREF</name>
<feature type="chain" id="PRO_0000243413" description="Large ribosomal subunit protein bL12">
    <location>
        <begin position="1"/>
        <end position="128"/>
    </location>
</feature>
<dbReference type="EMBL" id="BA000035">
    <property type="protein sequence ID" value="BAC17304.1"/>
    <property type="molecule type" value="Genomic_DNA"/>
</dbReference>
<dbReference type="RefSeq" id="WP_006770269.1">
    <property type="nucleotide sequence ID" value="NC_004369.1"/>
</dbReference>
<dbReference type="SMR" id="Q8FSA0"/>
<dbReference type="STRING" id="196164.gene:10740896"/>
<dbReference type="KEGG" id="cef:CE0494"/>
<dbReference type="eggNOG" id="COG0222">
    <property type="taxonomic scope" value="Bacteria"/>
</dbReference>
<dbReference type="HOGENOM" id="CLU_086499_3_0_11"/>
<dbReference type="OrthoDB" id="9811748at2"/>
<dbReference type="Proteomes" id="UP000001409">
    <property type="component" value="Chromosome"/>
</dbReference>
<dbReference type="GO" id="GO:0022625">
    <property type="term" value="C:cytosolic large ribosomal subunit"/>
    <property type="evidence" value="ECO:0007669"/>
    <property type="project" value="TreeGrafter"/>
</dbReference>
<dbReference type="GO" id="GO:0003729">
    <property type="term" value="F:mRNA binding"/>
    <property type="evidence" value="ECO:0007669"/>
    <property type="project" value="TreeGrafter"/>
</dbReference>
<dbReference type="GO" id="GO:0003735">
    <property type="term" value="F:structural constituent of ribosome"/>
    <property type="evidence" value="ECO:0007669"/>
    <property type="project" value="InterPro"/>
</dbReference>
<dbReference type="GO" id="GO:0006412">
    <property type="term" value="P:translation"/>
    <property type="evidence" value="ECO:0007669"/>
    <property type="project" value="UniProtKB-UniRule"/>
</dbReference>
<dbReference type="CDD" id="cd00387">
    <property type="entry name" value="Ribosomal_L7_L12"/>
    <property type="match status" value="1"/>
</dbReference>
<dbReference type="FunFam" id="1.20.5.710:FF:000005">
    <property type="entry name" value="50S ribosomal protein L7/L12"/>
    <property type="match status" value="1"/>
</dbReference>
<dbReference type="FunFam" id="3.30.1390.10:FF:000001">
    <property type="entry name" value="50S ribosomal protein L7/L12"/>
    <property type="match status" value="1"/>
</dbReference>
<dbReference type="Gene3D" id="3.30.1390.10">
    <property type="match status" value="1"/>
</dbReference>
<dbReference type="Gene3D" id="1.20.5.710">
    <property type="entry name" value="Single helix bin"/>
    <property type="match status" value="1"/>
</dbReference>
<dbReference type="HAMAP" id="MF_00368">
    <property type="entry name" value="Ribosomal_bL12"/>
    <property type="match status" value="1"/>
</dbReference>
<dbReference type="InterPro" id="IPR000206">
    <property type="entry name" value="Ribosomal_bL12"/>
</dbReference>
<dbReference type="InterPro" id="IPR013823">
    <property type="entry name" value="Ribosomal_bL12_C"/>
</dbReference>
<dbReference type="InterPro" id="IPR014719">
    <property type="entry name" value="Ribosomal_bL12_C/ClpS-like"/>
</dbReference>
<dbReference type="InterPro" id="IPR008932">
    <property type="entry name" value="Ribosomal_bL12_oligo"/>
</dbReference>
<dbReference type="InterPro" id="IPR036235">
    <property type="entry name" value="Ribosomal_bL12_oligo_N_sf"/>
</dbReference>
<dbReference type="NCBIfam" id="TIGR00855">
    <property type="entry name" value="L12"/>
    <property type="match status" value="1"/>
</dbReference>
<dbReference type="PANTHER" id="PTHR45987">
    <property type="entry name" value="39S RIBOSOMAL PROTEIN L12"/>
    <property type="match status" value="1"/>
</dbReference>
<dbReference type="PANTHER" id="PTHR45987:SF4">
    <property type="entry name" value="LARGE RIBOSOMAL SUBUNIT PROTEIN BL12M"/>
    <property type="match status" value="1"/>
</dbReference>
<dbReference type="Pfam" id="PF00542">
    <property type="entry name" value="Ribosomal_L12"/>
    <property type="match status" value="1"/>
</dbReference>
<dbReference type="Pfam" id="PF16320">
    <property type="entry name" value="Ribosomal_L12_N"/>
    <property type="match status" value="1"/>
</dbReference>
<dbReference type="SUPFAM" id="SSF54736">
    <property type="entry name" value="ClpS-like"/>
    <property type="match status" value="1"/>
</dbReference>
<dbReference type="SUPFAM" id="SSF48300">
    <property type="entry name" value="Ribosomal protein L7/12, oligomerisation (N-terminal) domain"/>
    <property type="match status" value="1"/>
</dbReference>
<sequence length="128" mass="13343">MAKLTKDELIEAFKEMTLIELSEFVKEFEEVFEVTAAAPVAVAAAGAAGGEAAAAEEKDEFDVVLEDAGAKKIGVIKVVRELVSGLGLKEAKELVEGAPKAILEGANKDDAEAAKAKLEEAGAKVTLK</sequence>
<reference key="1">
    <citation type="journal article" date="2003" name="Genome Res.">
        <title>Comparative complete genome sequence analysis of the amino acid replacements responsible for the thermostability of Corynebacterium efficiens.</title>
        <authorList>
            <person name="Nishio Y."/>
            <person name="Nakamura Y."/>
            <person name="Kawarabayasi Y."/>
            <person name="Usuda Y."/>
            <person name="Kimura E."/>
            <person name="Sugimoto S."/>
            <person name="Matsui K."/>
            <person name="Yamagishi A."/>
            <person name="Kikuchi H."/>
            <person name="Ikeo K."/>
            <person name="Gojobori T."/>
        </authorList>
    </citation>
    <scope>NUCLEOTIDE SEQUENCE [LARGE SCALE GENOMIC DNA]</scope>
    <source>
        <strain>DSM 44549 / YS-314 / AJ 12310 / JCM 11189 / NBRC 100395</strain>
    </source>
</reference>
<gene>
    <name evidence="1" type="primary">rplL</name>
    <name type="ordered locus">CE0494</name>
</gene>
<protein>
    <recommendedName>
        <fullName evidence="1">Large ribosomal subunit protein bL12</fullName>
    </recommendedName>
    <alternativeName>
        <fullName evidence="2">50S ribosomal protein L7/L12</fullName>
    </alternativeName>
</protein>
<proteinExistence type="inferred from homology"/>
<keyword id="KW-1185">Reference proteome</keyword>
<keyword id="KW-0687">Ribonucleoprotein</keyword>
<keyword id="KW-0689">Ribosomal protein</keyword>
<comment type="function">
    <text evidence="1">Forms part of the ribosomal stalk which helps the ribosome interact with GTP-bound translation factors. Is thus essential for accurate translation.</text>
</comment>
<comment type="subunit">
    <text evidence="1">Homodimer. Part of the ribosomal stalk of the 50S ribosomal subunit. Forms a multimeric L10(L12)X complex, where L10 forms an elongated spine to which 2 to 4 L12 dimers bind in a sequential fashion. Binds GTP-bound translation factors.</text>
</comment>
<comment type="similarity">
    <text evidence="1">Belongs to the bacterial ribosomal protein bL12 family.</text>
</comment>
<accession>Q8FSA0</accession>